<keyword id="KW-0002">3D-structure</keyword>
<keyword id="KW-0903">Direct protein sequencing</keyword>
<keyword id="KW-1015">Disulfide bond</keyword>
<keyword id="KW-0574">Periplasm</keyword>
<keyword id="KW-0676">Redox-active center</keyword>
<keyword id="KW-1185">Reference proteome</keyword>
<keyword id="KW-0732">Signal</keyword>
<name>DSBA_ECOLI</name>
<gene>
    <name type="primary">dsbA</name>
    <name type="synonym">dsf</name>
    <name type="synonym">ppfA</name>
    <name type="ordered locus">b3860</name>
    <name type="ordered locus">JW3832</name>
</gene>
<protein>
    <recommendedName>
        <fullName>Thiol:disulfide interchange protein DsbA</fullName>
    </recommendedName>
</protein>
<organism>
    <name type="scientific">Escherichia coli (strain K12)</name>
    <dbReference type="NCBI Taxonomy" id="83333"/>
    <lineage>
        <taxon>Bacteria</taxon>
        <taxon>Pseudomonadati</taxon>
        <taxon>Pseudomonadota</taxon>
        <taxon>Gammaproteobacteria</taxon>
        <taxon>Enterobacterales</taxon>
        <taxon>Enterobacteriaceae</taxon>
        <taxon>Escherichia</taxon>
    </lineage>
</organism>
<feature type="signal peptide" evidence="4 5 7">
    <location>
        <begin position="1"/>
        <end position="19"/>
    </location>
</feature>
<feature type="chain" id="PRO_0000034252" description="Thiol:disulfide interchange protein DsbA">
    <location>
        <begin position="20"/>
        <end position="208"/>
    </location>
</feature>
<feature type="domain" description="Thioredoxin" evidence="1">
    <location>
        <begin position="20"/>
        <end position="150"/>
    </location>
</feature>
<feature type="disulfide bond" description="Redox-active" evidence="1 6">
    <location>
        <begin position="49"/>
        <end position="52"/>
    </location>
</feature>
<feature type="turn" evidence="9">
    <location>
        <begin position="25"/>
        <end position="27"/>
    </location>
</feature>
<feature type="strand" evidence="9">
    <location>
        <begin position="28"/>
        <end position="30"/>
    </location>
</feature>
<feature type="strand" evidence="9">
    <location>
        <begin position="40"/>
        <end position="45"/>
    </location>
</feature>
<feature type="helix" evidence="9">
    <location>
        <begin position="50"/>
        <end position="57"/>
    </location>
</feature>
<feature type="helix" evidence="9">
    <location>
        <begin position="61"/>
        <end position="68"/>
    </location>
</feature>
<feature type="strand" evidence="9">
    <location>
        <begin position="75"/>
        <end position="79"/>
    </location>
</feature>
<feature type="strand" evidence="9">
    <location>
        <begin position="81"/>
        <end position="84"/>
    </location>
</feature>
<feature type="helix" evidence="9">
    <location>
        <begin position="85"/>
        <end position="101"/>
    </location>
</feature>
<feature type="helix" evidence="9">
    <location>
        <begin position="104"/>
        <end position="116"/>
    </location>
</feature>
<feature type="helix" evidence="9">
    <location>
        <begin position="124"/>
        <end position="133"/>
    </location>
</feature>
<feature type="helix" evidence="9">
    <location>
        <begin position="138"/>
        <end position="145"/>
    </location>
</feature>
<feature type="helix" evidence="9">
    <location>
        <begin position="148"/>
        <end position="162"/>
    </location>
</feature>
<feature type="turn" evidence="9">
    <location>
        <begin position="163"/>
        <end position="165"/>
    </location>
</feature>
<feature type="strand" evidence="9">
    <location>
        <begin position="168"/>
        <end position="174"/>
    </location>
</feature>
<feature type="turn" evidence="9">
    <location>
        <begin position="175"/>
        <end position="177"/>
    </location>
</feature>
<feature type="strand" evidence="9">
    <location>
        <begin position="178"/>
        <end position="180"/>
    </location>
</feature>
<feature type="helix" evidence="10">
    <location>
        <begin position="182"/>
        <end position="184"/>
    </location>
</feature>
<feature type="helix" evidence="9">
    <location>
        <begin position="190"/>
        <end position="206"/>
    </location>
</feature>
<comment type="function">
    <text evidence="2 3">Required for disulfide bond formation in some periplasmic proteins such as PhoA or OmpA. Acts by transferring its disulfide bond to other proteins and is reduced in the process. DsbA is reoxidized by DsbB. Required for pilus biogenesis. PhoP-regulated transcription is redox-sensitive, being activated when the periplasm becomes more reducing (deletion of dsbA/dsbB, treatment with dithiothreitol). MgrB acts between DsbA/DsbB and PhoP/PhoQ in this pathway.</text>
</comment>
<comment type="interaction">
    <interactant intactId="EBI-549711">
        <id>P0AEG4</id>
    </interactant>
    <interactant intactId="EBI-1170740">
        <id>P0A6M2</id>
        <label>dsbB</label>
    </interactant>
    <organismsDiffer>false</organismsDiffer>
    <experiments>5</experiments>
</comment>
<comment type="interaction">
    <interactant intactId="EBI-549711">
        <id>P0AEG4</id>
    </interactant>
    <interactant intactId="EBI-552958">
        <id>P00634</id>
        <label>phoA</label>
    </interactant>
    <organismsDiffer>false</organismsDiffer>
    <experiments>2</experiments>
</comment>
<comment type="subcellular location">
    <subcellularLocation>
        <location>Periplasm</location>
    </subcellularLocation>
</comment>
<comment type="disruption phenotype">
    <text evidence="3">Induction of the PhoP/PhoQ two-component regulatory system, suppressed by 50 uM CuSO(4).</text>
</comment>
<comment type="similarity">
    <text evidence="8">Belongs to the thioredoxin family. DsbA subfamily.</text>
</comment>
<accession>P0AEG4</accession>
<accession>P24991</accession>
<accession>Q2M8F8</accession>
<accession>Q46951</accession>
<accession>Q46952</accession>
<proteinExistence type="evidence at protein level"/>
<evidence type="ECO:0000255" key="1">
    <source>
        <dbReference type="PROSITE-ProRule" id="PRU00691"/>
    </source>
</evidence>
<evidence type="ECO:0000269" key="2">
    <source>
    </source>
</evidence>
<evidence type="ECO:0000269" key="3">
    <source>
    </source>
</evidence>
<evidence type="ECO:0000269" key="4">
    <source>
    </source>
</evidence>
<evidence type="ECO:0000269" key="5">
    <source>
    </source>
</evidence>
<evidence type="ECO:0000269" key="6">
    <source>
    </source>
</evidence>
<evidence type="ECO:0000269" key="7">
    <source>
    </source>
</evidence>
<evidence type="ECO:0000305" key="8"/>
<evidence type="ECO:0007829" key="9">
    <source>
        <dbReference type="PDB" id="8CXE"/>
    </source>
</evidence>
<evidence type="ECO:0007829" key="10">
    <source>
        <dbReference type="PDB" id="8EOC"/>
    </source>
</evidence>
<dbReference type="EMBL" id="X80762">
    <property type="protein sequence ID" value="CAA56736.1"/>
    <property type="molecule type" value="Genomic_DNA"/>
</dbReference>
<dbReference type="EMBL" id="M77746">
    <property type="protein sequence ID" value="AAA23715.1"/>
    <property type="molecule type" value="Genomic_DNA"/>
</dbReference>
<dbReference type="EMBL" id="X63186">
    <property type="protein sequence ID" value="CAA44868.1"/>
    <property type="molecule type" value="Genomic_DNA"/>
</dbReference>
<dbReference type="EMBL" id="L19201">
    <property type="protein sequence ID" value="AAB02995.1"/>
    <property type="molecule type" value="Genomic_DNA"/>
</dbReference>
<dbReference type="EMBL" id="U00096">
    <property type="protein sequence ID" value="AAC76858.1"/>
    <property type="molecule type" value="Genomic_DNA"/>
</dbReference>
<dbReference type="EMBL" id="AP009048">
    <property type="protein sequence ID" value="BAE77448.1"/>
    <property type="molecule type" value="Genomic_DNA"/>
</dbReference>
<dbReference type="EMBL" id="U35817">
    <property type="protein sequence ID" value="AAC43519.1"/>
    <property type="molecule type" value="Genomic_DNA"/>
</dbReference>
<dbReference type="EMBL" id="U35818">
    <property type="protein sequence ID" value="AAC43520.1"/>
    <property type="molecule type" value="Genomic_DNA"/>
</dbReference>
<dbReference type="EMBL" id="U35819">
    <property type="protein sequence ID" value="AAC43521.1"/>
    <property type="molecule type" value="Genomic_DNA"/>
</dbReference>
<dbReference type="EMBL" id="U35820">
    <property type="protein sequence ID" value="AAC43522.1"/>
    <property type="molecule type" value="Genomic_DNA"/>
</dbReference>
<dbReference type="EMBL" id="U35821">
    <property type="protein sequence ID" value="AAC43523.1"/>
    <property type="molecule type" value="Genomic_DNA"/>
</dbReference>
<dbReference type="EMBL" id="U35822">
    <property type="protein sequence ID" value="AAC43524.1"/>
    <property type="molecule type" value="Genomic_DNA"/>
</dbReference>
<dbReference type="EMBL" id="U35823">
    <property type="protein sequence ID" value="AAC43525.1"/>
    <property type="molecule type" value="Genomic_DNA"/>
</dbReference>
<dbReference type="EMBL" id="U35824">
    <property type="protein sequence ID" value="AAC43526.1"/>
    <property type="molecule type" value="Genomic_DNA"/>
</dbReference>
<dbReference type="EMBL" id="U35825">
    <property type="protein sequence ID" value="AAC43527.1"/>
    <property type="molecule type" value="Genomic_DNA"/>
</dbReference>
<dbReference type="EMBL" id="U36828">
    <property type="protein sequence ID" value="AAC43528.1"/>
    <property type="molecule type" value="Genomic_DNA"/>
</dbReference>
<dbReference type="EMBL" id="U36829">
    <property type="protein sequence ID" value="AAC43529.1"/>
    <property type="molecule type" value="Genomic_DNA"/>
</dbReference>
<dbReference type="EMBL" id="U36830">
    <property type="protein sequence ID" value="AAC43530.1"/>
    <property type="molecule type" value="Genomic_DNA"/>
</dbReference>
<dbReference type="EMBL" id="U36831">
    <property type="protein sequence ID" value="AAC43531.1"/>
    <property type="molecule type" value="Genomic_DNA"/>
</dbReference>
<dbReference type="EMBL" id="U36832">
    <property type="protein sequence ID" value="AAC43532.1"/>
    <property type="molecule type" value="Genomic_DNA"/>
</dbReference>
<dbReference type="EMBL" id="U36833">
    <property type="protein sequence ID" value="AAC43533.1"/>
    <property type="molecule type" value="Genomic_DNA"/>
</dbReference>
<dbReference type="EMBL" id="U36834">
    <property type="protein sequence ID" value="AAC43534.1"/>
    <property type="molecule type" value="Genomic_DNA"/>
</dbReference>
<dbReference type="EMBL" id="U36835">
    <property type="protein sequence ID" value="AAC43535.1"/>
    <property type="molecule type" value="Genomic_DNA"/>
</dbReference>
<dbReference type="EMBL" id="U35662">
    <property type="protein sequence ID" value="AAA82614.1"/>
    <property type="molecule type" value="Genomic_DNA"/>
</dbReference>
<dbReference type="PIR" id="A39292">
    <property type="entry name" value="A39292"/>
</dbReference>
<dbReference type="RefSeq" id="NP_418297.1">
    <property type="nucleotide sequence ID" value="NC_000913.3"/>
</dbReference>
<dbReference type="RefSeq" id="WP_000725337.1">
    <property type="nucleotide sequence ID" value="NZ_SSZK01000026.1"/>
</dbReference>
<dbReference type="PDB" id="1A23">
    <property type="method" value="NMR"/>
    <property type="chains" value="A=20-208"/>
</dbReference>
<dbReference type="PDB" id="1A24">
    <property type="method" value="NMR"/>
    <property type="chains" value="A=20-208"/>
</dbReference>
<dbReference type="PDB" id="1A2J">
    <property type="method" value="X-ray"/>
    <property type="resolution" value="2.00 A"/>
    <property type="chains" value="A=20-208"/>
</dbReference>
<dbReference type="PDB" id="1A2L">
    <property type="method" value="X-ray"/>
    <property type="resolution" value="2.70 A"/>
    <property type="chains" value="A/B=20-208"/>
</dbReference>
<dbReference type="PDB" id="1A2M">
    <property type="method" value="X-ray"/>
    <property type="resolution" value="2.70 A"/>
    <property type="chains" value="A/B=20-208"/>
</dbReference>
<dbReference type="PDB" id="1AC1">
    <property type="method" value="X-ray"/>
    <property type="resolution" value="2.00 A"/>
    <property type="chains" value="A/B=20-208"/>
</dbReference>
<dbReference type="PDB" id="1ACV">
    <property type="method" value="X-ray"/>
    <property type="resolution" value="1.90 A"/>
    <property type="chains" value="A/B=20-208"/>
</dbReference>
<dbReference type="PDB" id="1BQ7">
    <property type="method" value="X-ray"/>
    <property type="resolution" value="2.80 A"/>
    <property type="chains" value="A/B/C/D/E/F=20-208"/>
</dbReference>
<dbReference type="PDB" id="1DSB">
    <property type="method" value="X-ray"/>
    <property type="resolution" value="2.00 A"/>
    <property type="chains" value="A/B=20-208"/>
</dbReference>
<dbReference type="PDB" id="1FVJ">
    <property type="method" value="X-ray"/>
    <property type="resolution" value="2.06 A"/>
    <property type="chains" value="A/B=20-208"/>
</dbReference>
<dbReference type="PDB" id="1FVK">
    <property type="method" value="X-ray"/>
    <property type="resolution" value="1.70 A"/>
    <property type="chains" value="A/B=20-208"/>
</dbReference>
<dbReference type="PDB" id="1TI1">
    <property type="method" value="X-ray"/>
    <property type="resolution" value="2.60 A"/>
    <property type="chains" value="A=20-208"/>
</dbReference>
<dbReference type="PDB" id="1U3A">
    <property type="method" value="X-ray"/>
    <property type="resolution" value="2.00 A"/>
    <property type="chains" value="A/B/D/E=20-208"/>
</dbReference>
<dbReference type="PDB" id="1UN2">
    <property type="method" value="X-ray"/>
    <property type="resolution" value="2.40 A"/>
    <property type="chains" value="A=20-208"/>
</dbReference>
<dbReference type="PDB" id="2B3S">
    <property type="method" value="X-ray"/>
    <property type="resolution" value="1.96 A"/>
    <property type="chains" value="A/B=20-208"/>
</dbReference>
<dbReference type="PDB" id="2B6M">
    <property type="method" value="X-ray"/>
    <property type="resolution" value="2.65 A"/>
    <property type="chains" value="A/B=20-208"/>
</dbReference>
<dbReference type="PDB" id="2HI7">
    <property type="method" value="X-ray"/>
    <property type="resolution" value="3.70 A"/>
    <property type="chains" value="A=20-208"/>
</dbReference>
<dbReference type="PDB" id="2LEG">
    <property type="method" value="NMR"/>
    <property type="chains" value="A=20-208"/>
</dbReference>
<dbReference type="PDB" id="2NDO">
    <property type="method" value="NMR"/>
    <property type="chains" value="A=20-208"/>
</dbReference>
<dbReference type="PDB" id="2ZUP">
    <property type="method" value="X-ray"/>
    <property type="resolution" value="3.70 A"/>
    <property type="chains" value="A=20-208"/>
</dbReference>
<dbReference type="PDB" id="3E9J">
    <property type="method" value="X-ray"/>
    <property type="resolution" value="3.70 A"/>
    <property type="chains" value="B/E=20-208"/>
</dbReference>
<dbReference type="PDB" id="4TKY">
    <property type="method" value="X-ray"/>
    <property type="resolution" value="2.50 A"/>
    <property type="chains" value="A/B/C/D=20-208"/>
</dbReference>
<dbReference type="PDB" id="4ZIJ">
    <property type="method" value="X-ray"/>
    <property type="resolution" value="1.78 A"/>
    <property type="chains" value="A/B=20-207"/>
</dbReference>
<dbReference type="PDB" id="5QKC">
    <property type="method" value="X-ray"/>
    <property type="resolution" value="2.15 A"/>
    <property type="chains" value="A/B=20-208"/>
</dbReference>
<dbReference type="PDB" id="5QKD">
    <property type="method" value="X-ray"/>
    <property type="resolution" value="2.11 A"/>
    <property type="chains" value="A/B=20-208"/>
</dbReference>
<dbReference type="PDB" id="5QKE">
    <property type="method" value="X-ray"/>
    <property type="resolution" value="2.12 A"/>
    <property type="chains" value="A/B=20-208"/>
</dbReference>
<dbReference type="PDB" id="5QKF">
    <property type="method" value="X-ray"/>
    <property type="resolution" value="2.14 A"/>
    <property type="chains" value="A/B=20-208"/>
</dbReference>
<dbReference type="PDB" id="5QKG">
    <property type="method" value="X-ray"/>
    <property type="resolution" value="1.90 A"/>
    <property type="chains" value="A/B=20-208"/>
</dbReference>
<dbReference type="PDB" id="5QKH">
    <property type="method" value="X-ray"/>
    <property type="resolution" value="2.65 A"/>
    <property type="chains" value="A/B=20-208"/>
</dbReference>
<dbReference type="PDB" id="5QKI">
    <property type="method" value="X-ray"/>
    <property type="resolution" value="2.30 A"/>
    <property type="chains" value="A/B=20-208"/>
</dbReference>
<dbReference type="PDB" id="5QKJ">
    <property type="method" value="X-ray"/>
    <property type="resolution" value="2.13 A"/>
    <property type="chains" value="A/B=20-208"/>
</dbReference>
<dbReference type="PDB" id="5QKK">
    <property type="method" value="X-ray"/>
    <property type="resolution" value="2.08 A"/>
    <property type="chains" value="A/B=20-208"/>
</dbReference>
<dbReference type="PDB" id="5QKL">
    <property type="method" value="X-ray"/>
    <property type="resolution" value="2.70 A"/>
    <property type="chains" value="A/B=20-208"/>
</dbReference>
<dbReference type="PDB" id="5QKM">
    <property type="method" value="X-ray"/>
    <property type="resolution" value="2.49 A"/>
    <property type="chains" value="A/B=20-208"/>
</dbReference>
<dbReference type="PDB" id="5QKN">
    <property type="method" value="X-ray"/>
    <property type="resolution" value="1.90 A"/>
    <property type="chains" value="A/B=20-208"/>
</dbReference>
<dbReference type="PDB" id="5QKO">
    <property type="method" value="X-ray"/>
    <property type="resolution" value="2.00 A"/>
    <property type="chains" value="A/B=20-208"/>
</dbReference>
<dbReference type="PDB" id="5QKP">
    <property type="method" value="X-ray"/>
    <property type="resolution" value="1.88 A"/>
    <property type="chains" value="A/B=20-208"/>
</dbReference>
<dbReference type="PDB" id="5QKQ">
    <property type="method" value="X-ray"/>
    <property type="resolution" value="2.42 A"/>
    <property type="chains" value="A/B=20-208"/>
</dbReference>
<dbReference type="PDB" id="5QKR">
    <property type="method" value="X-ray"/>
    <property type="resolution" value="2.50 A"/>
    <property type="chains" value="A/B=20-208"/>
</dbReference>
<dbReference type="PDB" id="5QKS">
    <property type="method" value="X-ray"/>
    <property type="resolution" value="2.12 A"/>
    <property type="chains" value="A/B=20-208"/>
</dbReference>
<dbReference type="PDB" id="5QKT">
    <property type="method" value="X-ray"/>
    <property type="resolution" value="1.90 A"/>
    <property type="chains" value="A/B=20-208"/>
</dbReference>
<dbReference type="PDB" id="5QKU">
    <property type="method" value="X-ray"/>
    <property type="resolution" value="2.31 A"/>
    <property type="chains" value="A/B=20-208"/>
</dbReference>
<dbReference type="PDB" id="5QKV">
    <property type="method" value="X-ray"/>
    <property type="resolution" value="2.14 A"/>
    <property type="chains" value="A/B=20-208"/>
</dbReference>
<dbReference type="PDB" id="5QKW">
    <property type="method" value="X-ray"/>
    <property type="resolution" value="1.97 A"/>
    <property type="chains" value="A/B=20-208"/>
</dbReference>
<dbReference type="PDB" id="5QKX">
    <property type="method" value="X-ray"/>
    <property type="resolution" value="2.00 A"/>
    <property type="chains" value="A/B=20-208"/>
</dbReference>
<dbReference type="PDB" id="5QKY">
    <property type="method" value="X-ray"/>
    <property type="resolution" value="2.42 A"/>
    <property type="chains" value="A/B=20-208"/>
</dbReference>
<dbReference type="PDB" id="5QKZ">
    <property type="method" value="X-ray"/>
    <property type="resolution" value="2.38 A"/>
    <property type="chains" value="A/B=20-208"/>
</dbReference>
<dbReference type="PDB" id="5QL0">
    <property type="method" value="X-ray"/>
    <property type="resolution" value="2.04 A"/>
    <property type="chains" value="A/B=20-208"/>
</dbReference>
<dbReference type="PDB" id="5QL1">
    <property type="method" value="X-ray"/>
    <property type="resolution" value="2.14 A"/>
    <property type="chains" value="A/B=20-208"/>
</dbReference>
<dbReference type="PDB" id="5QL2">
    <property type="method" value="X-ray"/>
    <property type="resolution" value="2.11 A"/>
    <property type="chains" value="A/B=20-208"/>
</dbReference>
<dbReference type="PDB" id="5QL3">
    <property type="method" value="X-ray"/>
    <property type="resolution" value="1.96 A"/>
    <property type="chains" value="A/B=20-208"/>
</dbReference>
<dbReference type="PDB" id="5QL4">
    <property type="method" value="X-ray"/>
    <property type="resolution" value="2.01 A"/>
    <property type="chains" value="A/B=20-208"/>
</dbReference>
<dbReference type="PDB" id="5QL5">
    <property type="method" value="X-ray"/>
    <property type="resolution" value="2.14 A"/>
    <property type="chains" value="A/B=20-208"/>
</dbReference>
<dbReference type="PDB" id="5QL6">
    <property type="method" value="X-ray"/>
    <property type="resolution" value="2.08 A"/>
    <property type="chains" value="A/B=20-208"/>
</dbReference>
<dbReference type="PDB" id="5QL7">
    <property type="method" value="X-ray"/>
    <property type="resolution" value="2.15 A"/>
    <property type="chains" value="A/B=20-208"/>
</dbReference>
<dbReference type="PDB" id="5QL8">
    <property type="method" value="X-ray"/>
    <property type="resolution" value="2.30 A"/>
    <property type="chains" value="A/B=20-208"/>
</dbReference>
<dbReference type="PDB" id="5QL9">
    <property type="method" value="X-ray"/>
    <property type="resolution" value="2.15 A"/>
    <property type="chains" value="A/B=20-208"/>
</dbReference>
<dbReference type="PDB" id="5QLA">
    <property type="method" value="X-ray"/>
    <property type="resolution" value="1.86 A"/>
    <property type="chains" value="A/B=20-208"/>
</dbReference>
<dbReference type="PDB" id="5QLB">
    <property type="method" value="X-ray"/>
    <property type="resolution" value="1.96 A"/>
    <property type="chains" value="A/B=20-208"/>
</dbReference>
<dbReference type="PDB" id="5QLC">
    <property type="method" value="X-ray"/>
    <property type="resolution" value="2.21 A"/>
    <property type="chains" value="A/B=20-208"/>
</dbReference>
<dbReference type="PDB" id="5QLD">
    <property type="method" value="X-ray"/>
    <property type="resolution" value="2.12 A"/>
    <property type="chains" value="A/B=20-208"/>
</dbReference>
<dbReference type="PDB" id="5QLE">
    <property type="method" value="X-ray"/>
    <property type="resolution" value="1.95 A"/>
    <property type="chains" value="A/B=20-208"/>
</dbReference>
<dbReference type="PDB" id="5QLF">
    <property type="method" value="X-ray"/>
    <property type="resolution" value="2.00 A"/>
    <property type="chains" value="A/B=20-208"/>
</dbReference>
<dbReference type="PDB" id="5QLG">
    <property type="method" value="X-ray"/>
    <property type="resolution" value="2.48 A"/>
    <property type="chains" value="A/B=20-208"/>
</dbReference>
<dbReference type="PDB" id="5QLH">
    <property type="method" value="X-ray"/>
    <property type="resolution" value="1.89 A"/>
    <property type="chains" value="A/B=20-208"/>
</dbReference>
<dbReference type="PDB" id="5QLI">
    <property type="method" value="X-ray"/>
    <property type="resolution" value="2.04 A"/>
    <property type="chains" value="A/B=20-208"/>
</dbReference>
<dbReference type="PDB" id="5QLJ">
    <property type="method" value="X-ray"/>
    <property type="resolution" value="1.96 A"/>
    <property type="chains" value="A/B=20-208"/>
</dbReference>
<dbReference type="PDB" id="5QLK">
    <property type="method" value="X-ray"/>
    <property type="resolution" value="1.99 A"/>
    <property type="chains" value="A/B=20-208"/>
</dbReference>
<dbReference type="PDB" id="5QLL">
    <property type="method" value="X-ray"/>
    <property type="resolution" value="1.96 A"/>
    <property type="chains" value="A/B=20-208"/>
</dbReference>
<dbReference type="PDB" id="5QLM">
    <property type="method" value="X-ray"/>
    <property type="resolution" value="2.07 A"/>
    <property type="chains" value="A/B=20-208"/>
</dbReference>
<dbReference type="PDB" id="5QLN">
    <property type="method" value="X-ray"/>
    <property type="resolution" value="2.41 A"/>
    <property type="chains" value="A/B=20-208"/>
</dbReference>
<dbReference type="PDB" id="5QLO">
    <property type="method" value="X-ray"/>
    <property type="resolution" value="2.37 A"/>
    <property type="chains" value="A/B=20-208"/>
</dbReference>
<dbReference type="PDB" id="5QLP">
    <property type="method" value="X-ray"/>
    <property type="resolution" value="2.52 A"/>
    <property type="chains" value="A/B=20-208"/>
</dbReference>
<dbReference type="PDB" id="5QLQ">
    <property type="method" value="X-ray"/>
    <property type="resolution" value="1.87 A"/>
    <property type="chains" value="A/B=20-208"/>
</dbReference>
<dbReference type="PDB" id="5QLR">
    <property type="method" value="X-ray"/>
    <property type="resolution" value="1.97 A"/>
    <property type="chains" value="A/B=20-208"/>
</dbReference>
<dbReference type="PDB" id="5QLS">
    <property type="method" value="X-ray"/>
    <property type="resolution" value="2.01 A"/>
    <property type="chains" value="A/B=20-208"/>
</dbReference>
<dbReference type="PDB" id="5QLT">
    <property type="method" value="X-ray"/>
    <property type="resolution" value="2.40 A"/>
    <property type="chains" value="A/B=20-208"/>
</dbReference>
<dbReference type="PDB" id="5QLU">
    <property type="method" value="X-ray"/>
    <property type="resolution" value="2.20 A"/>
    <property type="chains" value="A/B=20-208"/>
</dbReference>
<dbReference type="PDB" id="5QLV">
    <property type="method" value="X-ray"/>
    <property type="resolution" value="2.34 A"/>
    <property type="chains" value="A/B=20-208"/>
</dbReference>
<dbReference type="PDB" id="5QLW">
    <property type="method" value="X-ray"/>
    <property type="resolution" value="1.96 A"/>
    <property type="chains" value="A/B=20-208"/>
</dbReference>
<dbReference type="PDB" id="5QLX">
    <property type="method" value="X-ray"/>
    <property type="resolution" value="1.90 A"/>
    <property type="chains" value="A/B=20-208"/>
</dbReference>
<dbReference type="PDB" id="5QLY">
    <property type="method" value="X-ray"/>
    <property type="resolution" value="2.17 A"/>
    <property type="chains" value="A/B=20-208"/>
</dbReference>
<dbReference type="PDB" id="5QLZ">
    <property type="method" value="X-ray"/>
    <property type="resolution" value="2.00 A"/>
    <property type="chains" value="A/B=20-208"/>
</dbReference>
<dbReference type="PDB" id="5QM0">
    <property type="method" value="X-ray"/>
    <property type="resolution" value="1.92 A"/>
    <property type="chains" value="A/B=20-208"/>
</dbReference>
<dbReference type="PDB" id="5QM1">
    <property type="method" value="X-ray"/>
    <property type="resolution" value="1.96 A"/>
    <property type="chains" value="A/B=20-208"/>
</dbReference>
<dbReference type="PDB" id="5QM2">
    <property type="method" value="X-ray"/>
    <property type="resolution" value="1.92 A"/>
    <property type="chains" value="A/B=20-208"/>
</dbReference>
<dbReference type="PDB" id="5QM3">
    <property type="method" value="X-ray"/>
    <property type="resolution" value="1.98 A"/>
    <property type="chains" value="A/B=20-208"/>
</dbReference>
<dbReference type="PDB" id="5QM4">
    <property type="method" value="X-ray"/>
    <property type="resolution" value="2.01 A"/>
    <property type="chains" value="A/B=20-208"/>
</dbReference>
<dbReference type="PDB" id="5QM5">
    <property type="method" value="X-ray"/>
    <property type="resolution" value="2.01 A"/>
    <property type="chains" value="A/B=20-208"/>
</dbReference>
<dbReference type="PDB" id="5QM6">
    <property type="method" value="X-ray"/>
    <property type="resolution" value="2.30 A"/>
    <property type="chains" value="A/B=20-208"/>
</dbReference>
<dbReference type="PDB" id="5QM7">
    <property type="method" value="X-ray"/>
    <property type="resolution" value="2.04 A"/>
    <property type="chains" value="A/B=20-208"/>
</dbReference>
<dbReference type="PDB" id="5QM8">
    <property type="method" value="X-ray"/>
    <property type="resolution" value="1.96 A"/>
    <property type="chains" value="A/B=20-208"/>
</dbReference>
<dbReference type="PDB" id="5QM9">
    <property type="method" value="X-ray"/>
    <property type="resolution" value="1.96 A"/>
    <property type="chains" value="A/B=20-208"/>
</dbReference>
<dbReference type="PDB" id="5QMA">
    <property type="method" value="X-ray"/>
    <property type="resolution" value="2.14 A"/>
    <property type="chains" value="A/B=20-208"/>
</dbReference>
<dbReference type="PDB" id="5QMB">
    <property type="method" value="X-ray"/>
    <property type="resolution" value="1.90 A"/>
    <property type="chains" value="A/B=20-208"/>
</dbReference>
<dbReference type="PDB" id="5QMC">
    <property type="method" value="X-ray"/>
    <property type="resolution" value="1.89 A"/>
    <property type="chains" value="A/B=20-208"/>
</dbReference>
<dbReference type="PDB" id="5QMD">
    <property type="method" value="X-ray"/>
    <property type="resolution" value="1.97 A"/>
    <property type="chains" value="A/B=20-208"/>
</dbReference>
<dbReference type="PDB" id="5QME">
    <property type="method" value="X-ray"/>
    <property type="resolution" value="1.83 A"/>
    <property type="chains" value="A/B=20-208"/>
</dbReference>
<dbReference type="PDB" id="5QMF">
    <property type="method" value="X-ray"/>
    <property type="resolution" value="2.00 A"/>
    <property type="chains" value="A/B=20-208"/>
</dbReference>
<dbReference type="PDB" id="5QMG">
    <property type="method" value="X-ray"/>
    <property type="resolution" value="2.11 A"/>
    <property type="chains" value="A/B=20-208"/>
</dbReference>
<dbReference type="PDB" id="5QMH">
    <property type="method" value="X-ray"/>
    <property type="resolution" value="2.08 A"/>
    <property type="chains" value="A/B=20-208"/>
</dbReference>
<dbReference type="PDB" id="5QMI">
    <property type="method" value="X-ray"/>
    <property type="resolution" value="1.67 A"/>
    <property type="chains" value="A/B=20-208"/>
</dbReference>
<dbReference type="PDB" id="5QMJ">
    <property type="method" value="X-ray"/>
    <property type="resolution" value="2.30 A"/>
    <property type="chains" value="A/B=20-208"/>
</dbReference>
<dbReference type="PDB" id="5QMK">
    <property type="method" value="X-ray"/>
    <property type="resolution" value="1.84 A"/>
    <property type="chains" value="A/B=20-208"/>
</dbReference>
<dbReference type="PDB" id="5QML">
    <property type="method" value="X-ray"/>
    <property type="resolution" value="2.19 A"/>
    <property type="chains" value="A/B=20-208"/>
</dbReference>
<dbReference type="PDB" id="5QMM">
    <property type="method" value="X-ray"/>
    <property type="resolution" value="1.96 A"/>
    <property type="chains" value="A/B=20-208"/>
</dbReference>
<dbReference type="PDB" id="5QMN">
    <property type="method" value="X-ray"/>
    <property type="resolution" value="1.98 A"/>
    <property type="chains" value="A/B=20-208"/>
</dbReference>
<dbReference type="PDB" id="5QMO">
    <property type="method" value="X-ray"/>
    <property type="resolution" value="2.05 A"/>
    <property type="chains" value="A/B=20-208"/>
</dbReference>
<dbReference type="PDB" id="5QMP">
    <property type="method" value="X-ray"/>
    <property type="resolution" value="2.00 A"/>
    <property type="chains" value="A/B=20-208"/>
</dbReference>
<dbReference type="PDB" id="5QMQ">
    <property type="method" value="X-ray"/>
    <property type="resolution" value="1.90 A"/>
    <property type="chains" value="A/B=20-208"/>
</dbReference>
<dbReference type="PDB" id="5QMR">
    <property type="method" value="X-ray"/>
    <property type="resolution" value="2.00 A"/>
    <property type="chains" value="A/B=20-208"/>
</dbReference>
<dbReference type="PDB" id="5QMS">
    <property type="method" value="X-ray"/>
    <property type="resolution" value="2.05 A"/>
    <property type="chains" value="A/B=20-208"/>
</dbReference>
<dbReference type="PDB" id="5QMT">
    <property type="method" value="X-ray"/>
    <property type="resolution" value="2.04 A"/>
    <property type="chains" value="A/B=20-208"/>
</dbReference>
<dbReference type="PDB" id="5QMU">
    <property type="method" value="X-ray"/>
    <property type="resolution" value="2.04 A"/>
    <property type="chains" value="A/B=20-208"/>
</dbReference>
<dbReference type="PDB" id="5QMV">
    <property type="method" value="X-ray"/>
    <property type="resolution" value="1.91 A"/>
    <property type="chains" value="A/B=20-208"/>
</dbReference>
<dbReference type="PDB" id="5QMW">
    <property type="method" value="X-ray"/>
    <property type="resolution" value="1.96 A"/>
    <property type="chains" value="A/B=20-208"/>
</dbReference>
<dbReference type="PDB" id="5QMX">
    <property type="method" value="X-ray"/>
    <property type="resolution" value="1.92 A"/>
    <property type="chains" value="A/B=20-208"/>
</dbReference>
<dbReference type="PDB" id="5QMY">
    <property type="method" value="X-ray"/>
    <property type="resolution" value="2.22 A"/>
    <property type="chains" value="A/B=20-208"/>
</dbReference>
<dbReference type="PDB" id="5QMZ">
    <property type="method" value="X-ray"/>
    <property type="resolution" value="2.08 A"/>
    <property type="chains" value="A/B=20-208"/>
</dbReference>
<dbReference type="PDB" id="5QN0">
    <property type="method" value="X-ray"/>
    <property type="resolution" value="2.01 A"/>
    <property type="chains" value="A/B=20-208"/>
</dbReference>
<dbReference type="PDB" id="5QN1">
    <property type="method" value="X-ray"/>
    <property type="resolution" value="2.20 A"/>
    <property type="chains" value="A/B=20-208"/>
</dbReference>
<dbReference type="PDB" id="5QN2">
    <property type="method" value="X-ray"/>
    <property type="resolution" value="2.30 A"/>
    <property type="chains" value="A/B=20-208"/>
</dbReference>
<dbReference type="PDB" id="5QN3">
    <property type="method" value="X-ray"/>
    <property type="resolution" value="2.14 A"/>
    <property type="chains" value="A/B=20-208"/>
</dbReference>
<dbReference type="PDB" id="5QN4">
    <property type="method" value="X-ray"/>
    <property type="resolution" value="2.37 A"/>
    <property type="chains" value="A/B=20-208"/>
</dbReference>
<dbReference type="PDB" id="5QN5">
    <property type="method" value="X-ray"/>
    <property type="resolution" value="1.89 A"/>
    <property type="chains" value="A/B=20-208"/>
</dbReference>
<dbReference type="PDB" id="5QN6">
    <property type="method" value="X-ray"/>
    <property type="resolution" value="1.90 A"/>
    <property type="chains" value="A/B=20-208"/>
</dbReference>
<dbReference type="PDB" id="5QN7">
    <property type="method" value="X-ray"/>
    <property type="resolution" value="2.14 A"/>
    <property type="chains" value="A/B=20-208"/>
</dbReference>
<dbReference type="PDB" id="5QN8">
    <property type="method" value="X-ray"/>
    <property type="resolution" value="1.87 A"/>
    <property type="chains" value="A/B=20-208"/>
</dbReference>
<dbReference type="PDB" id="5QN9">
    <property type="method" value="X-ray"/>
    <property type="resolution" value="1.94 A"/>
    <property type="chains" value="A/B=20-208"/>
</dbReference>
<dbReference type="PDB" id="5QNA">
    <property type="method" value="X-ray"/>
    <property type="resolution" value="2.14 A"/>
    <property type="chains" value="A/B=20-208"/>
</dbReference>
<dbReference type="PDB" id="5QNB">
    <property type="method" value="X-ray"/>
    <property type="resolution" value="1.91 A"/>
    <property type="chains" value="A/B=20-208"/>
</dbReference>
<dbReference type="PDB" id="5QNC">
    <property type="method" value="X-ray"/>
    <property type="resolution" value="2.14 A"/>
    <property type="chains" value="A/B=20-208"/>
</dbReference>
<dbReference type="PDB" id="5QND">
    <property type="method" value="X-ray"/>
    <property type="resolution" value="1.90 A"/>
    <property type="chains" value="A/B=20-208"/>
</dbReference>
<dbReference type="PDB" id="5QNE">
    <property type="method" value="X-ray"/>
    <property type="resolution" value="2.39 A"/>
    <property type="chains" value="A/B=20-208"/>
</dbReference>
<dbReference type="PDB" id="5QNF">
    <property type="method" value="X-ray"/>
    <property type="resolution" value="1.96 A"/>
    <property type="chains" value="A/B=20-208"/>
</dbReference>
<dbReference type="PDB" id="5QNG">
    <property type="method" value="X-ray"/>
    <property type="resolution" value="1.90 A"/>
    <property type="chains" value="A/B=20-208"/>
</dbReference>
<dbReference type="PDB" id="5QNH">
    <property type="method" value="X-ray"/>
    <property type="resolution" value="2.21 A"/>
    <property type="chains" value="A/B=20-208"/>
</dbReference>
<dbReference type="PDB" id="5QNI">
    <property type="method" value="X-ray"/>
    <property type="resolution" value="1.97 A"/>
    <property type="chains" value="A/B=20-208"/>
</dbReference>
<dbReference type="PDB" id="5QNJ">
    <property type="method" value="X-ray"/>
    <property type="resolution" value="1.86 A"/>
    <property type="chains" value="A/B=20-208"/>
</dbReference>
<dbReference type="PDB" id="5QNK">
    <property type="method" value="X-ray"/>
    <property type="resolution" value="1.90 A"/>
    <property type="chains" value="A/B=20-208"/>
</dbReference>
<dbReference type="PDB" id="5QNL">
    <property type="method" value="X-ray"/>
    <property type="resolution" value="1.75 A"/>
    <property type="chains" value="A/B=20-208"/>
</dbReference>
<dbReference type="PDB" id="5QNM">
    <property type="method" value="X-ray"/>
    <property type="resolution" value="1.86 A"/>
    <property type="chains" value="A/B=20-208"/>
</dbReference>
<dbReference type="PDB" id="5QNN">
    <property type="method" value="X-ray"/>
    <property type="resolution" value="1.79 A"/>
    <property type="chains" value="A/B=20-208"/>
</dbReference>
<dbReference type="PDB" id="5QNO">
    <property type="method" value="X-ray"/>
    <property type="resolution" value="1.95 A"/>
    <property type="chains" value="A/B=20-208"/>
</dbReference>
<dbReference type="PDB" id="5QNP">
    <property type="method" value="X-ray"/>
    <property type="resolution" value="1.67 A"/>
    <property type="chains" value="A/B=20-208"/>
</dbReference>
<dbReference type="PDB" id="5QNQ">
    <property type="method" value="X-ray"/>
    <property type="resolution" value="1.67 A"/>
    <property type="chains" value="A/B=20-208"/>
</dbReference>
<dbReference type="PDB" id="5QNR">
    <property type="method" value="X-ray"/>
    <property type="resolution" value="1.75 A"/>
    <property type="chains" value="A/B=20-208"/>
</dbReference>
<dbReference type="PDB" id="5QNS">
    <property type="method" value="X-ray"/>
    <property type="resolution" value="1.78 A"/>
    <property type="chains" value="A/B=20-208"/>
</dbReference>
<dbReference type="PDB" id="5QNT">
    <property type="method" value="X-ray"/>
    <property type="resolution" value="1.75 A"/>
    <property type="chains" value="A/B=20-208"/>
</dbReference>
<dbReference type="PDB" id="5QNU">
    <property type="method" value="X-ray"/>
    <property type="resolution" value="1.86 A"/>
    <property type="chains" value="A/B=20-208"/>
</dbReference>
<dbReference type="PDB" id="5QNV">
    <property type="method" value="X-ray"/>
    <property type="resolution" value="1.75 A"/>
    <property type="chains" value="A/B=20-208"/>
</dbReference>
<dbReference type="PDB" id="5QNW">
    <property type="method" value="X-ray"/>
    <property type="resolution" value="1.88 A"/>
    <property type="chains" value="A/B=20-208"/>
</dbReference>
<dbReference type="PDB" id="5QNX">
    <property type="method" value="X-ray"/>
    <property type="resolution" value="1.68 A"/>
    <property type="chains" value="A/B=20-208"/>
</dbReference>
<dbReference type="PDB" id="5QNY">
    <property type="method" value="X-ray"/>
    <property type="resolution" value="1.59 A"/>
    <property type="chains" value="A/B=20-208"/>
</dbReference>
<dbReference type="PDB" id="5QNZ">
    <property type="method" value="X-ray"/>
    <property type="resolution" value="1.79 A"/>
    <property type="chains" value="A/B=20-208"/>
</dbReference>
<dbReference type="PDB" id="5QO0">
    <property type="method" value="X-ray"/>
    <property type="resolution" value="1.83 A"/>
    <property type="chains" value="A/B=20-208"/>
</dbReference>
<dbReference type="PDB" id="5QO1">
    <property type="method" value="X-ray"/>
    <property type="resolution" value="1.84 A"/>
    <property type="chains" value="A/B=20-208"/>
</dbReference>
<dbReference type="PDB" id="5QO2">
    <property type="method" value="X-ray"/>
    <property type="resolution" value="1.64 A"/>
    <property type="chains" value="A/B=20-208"/>
</dbReference>
<dbReference type="PDB" id="5QO3">
    <property type="method" value="X-ray"/>
    <property type="resolution" value="1.73 A"/>
    <property type="chains" value="A/B=20-208"/>
</dbReference>
<dbReference type="PDB" id="5QO4">
    <property type="method" value="X-ray"/>
    <property type="resolution" value="1.78 A"/>
    <property type="chains" value="A/B=20-208"/>
</dbReference>
<dbReference type="PDB" id="5QO5">
    <property type="method" value="X-ray"/>
    <property type="resolution" value="1.77 A"/>
    <property type="chains" value="A/B=20-208"/>
</dbReference>
<dbReference type="PDB" id="5QO6">
    <property type="method" value="X-ray"/>
    <property type="resolution" value="1.79 A"/>
    <property type="chains" value="A/B=20-208"/>
</dbReference>
<dbReference type="PDB" id="5QO7">
    <property type="method" value="X-ray"/>
    <property type="resolution" value="1.97 A"/>
    <property type="chains" value="A/B=20-208"/>
</dbReference>
<dbReference type="PDB" id="5QO8">
    <property type="method" value="X-ray"/>
    <property type="resolution" value="1.73 A"/>
    <property type="chains" value="A/B=20-208"/>
</dbReference>
<dbReference type="PDB" id="5QO9">
    <property type="method" value="X-ray"/>
    <property type="resolution" value="1.59 A"/>
    <property type="chains" value="A/B=20-208"/>
</dbReference>
<dbReference type="PDB" id="5QOA">
    <property type="method" value="X-ray"/>
    <property type="resolution" value="1.98 A"/>
    <property type="chains" value="A/B=20-208"/>
</dbReference>
<dbReference type="PDB" id="5QOB">
    <property type="method" value="X-ray"/>
    <property type="resolution" value="1.70 A"/>
    <property type="chains" value="A/B=20-208"/>
</dbReference>
<dbReference type="PDB" id="5QOC">
    <property type="method" value="X-ray"/>
    <property type="resolution" value="1.67 A"/>
    <property type="chains" value="A/B=20-208"/>
</dbReference>
<dbReference type="PDB" id="5QOD">
    <property type="method" value="X-ray"/>
    <property type="resolution" value="1.91 A"/>
    <property type="chains" value="A/B=20-208"/>
</dbReference>
<dbReference type="PDB" id="5QOE">
    <property type="method" value="X-ray"/>
    <property type="resolution" value="1.67 A"/>
    <property type="chains" value="A/B=20-208"/>
</dbReference>
<dbReference type="PDB" id="5QOF">
    <property type="method" value="X-ray"/>
    <property type="resolution" value="1.64 A"/>
    <property type="chains" value="A/B=20-208"/>
</dbReference>
<dbReference type="PDB" id="5QOG">
    <property type="method" value="X-ray"/>
    <property type="resolution" value="1.79 A"/>
    <property type="chains" value="A/B=20-208"/>
</dbReference>
<dbReference type="PDB" id="6BQX">
    <property type="method" value="X-ray"/>
    <property type="resolution" value="1.99 A"/>
    <property type="chains" value="A/B=20-208"/>
</dbReference>
<dbReference type="PDB" id="6BR4">
    <property type="method" value="X-ray"/>
    <property type="resolution" value="1.99 A"/>
    <property type="chains" value="A/B=20-208"/>
</dbReference>
<dbReference type="PDB" id="6PBI">
    <property type="method" value="X-ray"/>
    <property type="resolution" value="1.90 A"/>
    <property type="chains" value="A/B=20-208"/>
</dbReference>
<dbReference type="PDB" id="6PC9">
    <property type="method" value="X-ray"/>
    <property type="resolution" value="2.30 A"/>
    <property type="chains" value="A/B=20-208"/>
</dbReference>
<dbReference type="PDB" id="6PD7">
    <property type="method" value="X-ray"/>
    <property type="resolution" value="1.92 A"/>
    <property type="chains" value="A/B=20-208"/>
</dbReference>
<dbReference type="PDB" id="6PDH">
    <property type="method" value="X-ray"/>
    <property type="resolution" value="1.96 A"/>
    <property type="chains" value="A/B=20-208"/>
</dbReference>
<dbReference type="PDB" id="6PG1">
    <property type="method" value="X-ray"/>
    <property type="resolution" value="2.01 A"/>
    <property type="chains" value="A/B=20-208"/>
</dbReference>
<dbReference type="PDB" id="6PG2">
    <property type="method" value="X-ray"/>
    <property type="resolution" value="1.91 A"/>
    <property type="chains" value="A/B=20-208"/>
</dbReference>
<dbReference type="PDB" id="6PGJ">
    <property type="method" value="X-ray"/>
    <property type="resolution" value="1.90 A"/>
    <property type="chains" value="A/B=20-208"/>
</dbReference>
<dbReference type="PDB" id="6PIQ">
    <property type="method" value="X-ray"/>
    <property type="resolution" value="2.10 A"/>
    <property type="chains" value="A/B=20-208"/>
</dbReference>
<dbReference type="PDB" id="6PLI">
    <property type="method" value="X-ray"/>
    <property type="resolution" value="1.93 A"/>
    <property type="chains" value="A/B=20-208"/>
</dbReference>
<dbReference type="PDB" id="6PMF">
    <property type="method" value="X-ray"/>
    <property type="resolution" value="1.95 A"/>
    <property type="chains" value="A/B=20-208"/>
</dbReference>
<dbReference type="PDB" id="6PML">
    <property type="method" value="X-ray"/>
    <property type="resolution" value="2.00 A"/>
    <property type="chains" value="A/B=20-208"/>
</dbReference>
<dbReference type="PDB" id="6POH">
    <property type="method" value="X-ray"/>
    <property type="resolution" value="1.67 A"/>
    <property type="chains" value="A/B=20-208"/>
</dbReference>
<dbReference type="PDB" id="6POI">
    <property type="method" value="X-ray"/>
    <property type="resolution" value="1.77 A"/>
    <property type="chains" value="A/B=20-208"/>
</dbReference>
<dbReference type="PDB" id="6POQ">
    <property type="method" value="X-ray"/>
    <property type="resolution" value="1.80 A"/>
    <property type="chains" value="A/B=20-208"/>
</dbReference>
<dbReference type="PDB" id="6PVY">
    <property type="method" value="X-ray"/>
    <property type="resolution" value="1.74 A"/>
    <property type="chains" value="A/B=20-208"/>
</dbReference>
<dbReference type="PDB" id="6PVZ">
    <property type="method" value="X-ray"/>
    <property type="resolution" value="1.99 A"/>
    <property type="chains" value="A/B=20-208"/>
</dbReference>
<dbReference type="PDB" id="6WHD">
    <property type="method" value="X-ray"/>
    <property type="resolution" value="1.99 A"/>
    <property type="chains" value="A/B=20-208"/>
</dbReference>
<dbReference type="PDB" id="6XSP">
    <property type="method" value="X-ray"/>
    <property type="resolution" value="2.30 A"/>
    <property type="chains" value="A/B=20-208"/>
</dbReference>
<dbReference type="PDB" id="6XSQ">
    <property type="method" value="X-ray"/>
    <property type="resolution" value="2.30 A"/>
    <property type="chains" value="A/B=20-208"/>
</dbReference>
<dbReference type="PDB" id="6XT3">
    <property type="method" value="X-ray"/>
    <property type="resolution" value="1.99 A"/>
    <property type="chains" value="A/B=20-208"/>
</dbReference>
<dbReference type="PDB" id="7L76">
    <property type="method" value="X-ray"/>
    <property type="resolution" value="1.83 A"/>
    <property type="chains" value="A/B=20-208"/>
</dbReference>
<dbReference type="PDB" id="7L7C">
    <property type="method" value="X-ray"/>
    <property type="resolution" value="1.80 A"/>
    <property type="chains" value="A/B=20-208"/>
</dbReference>
<dbReference type="PDB" id="7LHP">
    <property type="method" value="X-ray"/>
    <property type="resolution" value="1.90 A"/>
    <property type="chains" value="A/B=20-208"/>
</dbReference>
<dbReference type="PDB" id="7LSM">
    <property type="method" value="X-ray"/>
    <property type="resolution" value="1.79 A"/>
    <property type="chains" value="A=20-208"/>
</dbReference>
<dbReference type="PDB" id="7S1C">
    <property type="method" value="X-ray"/>
    <property type="resolution" value="1.95 A"/>
    <property type="chains" value="A/B=20-208"/>
</dbReference>
<dbReference type="PDB" id="7S1D">
    <property type="method" value="X-ray"/>
    <property type="resolution" value="1.59 A"/>
    <property type="chains" value="A/B=20-208"/>
</dbReference>
<dbReference type="PDB" id="7S1F">
    <property type="method" value="X-ray"/>
    <property type="resolution" value="1.76 A"/>
    <property type="chains" value="A/B=20-208"/>
</dbReference>
<dbReference type="PDB" id="7S1L">
    <property type="method" value="X-ray"/>
    <property type="resolution" value="1.62 A"/>
    <property type="chains" value="A/B=20-208"/>
</dbReference>
<dbReference type="PDB" id="7TTV">
    <property type="method" value="X-ray"/>
    <property type="resolution" value="1.99 A"/>
    <property type="chains" value="A/B=20-208"/>
</dbReference>
<dbReference type="PDB" id="8CXD">
    <property type="method" value="X-ray"/>
    <property type="resolution" value="1.80 A"/>
    <property type="chains" value="A/B=20-208"/>
</dbReference>
<dbReference type="PDB" id="8CXE">
    <property type="method" value="X-ray"/>
    <property type="resolution" value="1.47 A"/>
    <property type="chains" value="A/B=20-208"/>
</dbReference>
<dbReference type="PDB" id="8CZM">
    <property type="method" value="X-ray"/>
    <property type="resolution" value="1.80 A"/>
    <property type="chains" value="A/B=20-208"/>
</dbReference>
<dbReference type="PDB" id="8CZN">
    <property type="method" value="X-ray"/>
    <property type="resolution" value="1.70 A"/>
    <property type="chains" value="A/B=20-208"/>
</dbReference>
<dbReference type="PDB" id="8D10">
    <property type="method" value="X-ray"/>
    <property type="resolution" value="1.60 A"/>
    <property type="chains" value="A/B=20-208"/>
</dbReference>
<dbReference type="PDB" id="8D11">
    <property type="method" value="X-ray"/>
    <property type="resolution" value="1.85 A"/>
    <property type="chains" value="A/B=20-208"/>
</dbReference>
<dbReference type="PDB" id="8D12">
    <property type="method" value="X-ray"/>
    <property type="resolution" value="1.60 A"/>
    <property type="chains" value="A/B=20-208"/>
</dbReference>
<dbReference type="PDB" id="8DG0">
    <property type="method" value="X-ray"/>
    <property type="resolution" value="2.50 A"/>
    <property type="chains" value="A/B=20-208"/>
</dbReference>
<dbReference type="PDB" id="8DG1">
    <property type="method" value="X-ray"/>
    <property type="resolution" value="1.95 A"/>
    <property type="chains" value="A/B=20-208"/>
</dbReference>
<dbReference type="PDB" id="8DG2">
    <property type="method" value="X-ray"/>
    <property type="resolution" value="1.95 A"/>
    <property type="chains" value="A/B=20-208"/>
</dbReference>
<dbReference type="PDB" id="8DN0">
    <property type="method" value="X-ray"/>
    <property type="resolution" value="1.57 A"/>
    <property type="chains" value="A/B=20-208"/>
</dbReference>
<dbReference type="PDB" id="8EOC">
    <property type="method" value="X-ray"/>
    <property type="resolution" value="1.47 A"/>
    <property type="chains" value="A/B=20-208"/>
</dbReference>
<dbReference type="PDB" id="8EQO">
    <property type="method" value="X-ray"/>
    <property type="resolution" value="1.62 A"/>
    <property type="chains" value="A/B=20-208"/>
</dbReference>
<dbReference type="PDB" id="8EQP">
    <property type="method" value="X-ray"/>
    <property type="resolution" value="2.30 A"/>
    <property type="chains" value="A/B/C/D=20-208"/>
</dbReference>
<dbReference type="PDB" id="8EQQ">
    <property type="method" value="X-ray"/>
    <property type="resolution" value="2.13 A"/>
    <property type="chains" value="A/B/C/D=20-208"/>
</dbReference>
<dbReference type="PDB" id="8EQR">
    <property type="method" value="X-ray"/>
    <property type="resolution" value="2.29 A"/>
    <property type="chains" value="A/B/C/D=20-208"/>
</dbReference>
<dbReference type="PDB" id="8U1Y">
    <property type="method" value="X-ray"/>
    <property type="resolution" value="1.74 A"/>
    <property type="chains" value="A/B=20-208"/>
</dbReference>
<dbReference type="PDB" id="8U59">
    <property type="method" value="X-ray"/>
    <property type="resolution" value="1.77 A"/>
    <property type="chains" value="A/B=20-208"/>
</dbReference>
<dbReference type="PDB" id="8UBQ">
    <property type="method" value="X-ray"/>
    <property type="resolution" value="2.00 A"/>
    <property type="chains" value="A/B=20-208"/>
</dbReference>
<dbReference type="PDB" id="8UF9">
    <property type="method" value="X-ray"/>
    <property type="resolution" value="2.16 A"/>
    <property type="chains" value="A/B=20-208"/>
</dbReference>
<dbReference type="PDB" id="9EGR">
    <property type="method" value="X-ray"/>
    <property type="resolution" value="1.62 A"/>
    <property type="chains" value="A/B=1-208"/>
</dbReference>
<dbReference type="PDBsum" id="1A23"/>
<dbReference type="PDBsum" id="1A24"/>
<dbReference type="PDBsum" id="1A2J"/>
<dbReference type="PDBsum" id="1A2L"/>
<dbReference type="PDBsum" id="1A2M"/>
<dbReference type="PDBsum" id="1AC1"/>
<dbReference type="PDBsum" id="1ACV"/>
<dbReference type="PDBsum" id="1BQ7"/>
<dbReference type="PDBsum" id="1DSB"/>
<dbReference type="PDBsum" id="1FVJ"/>
<dbReference type="PDBsum" id="1FVK"/>
<dbReference type="PDBsum" id="1TI1"/>
<dbReference type="PDBsum" id="1U3A"/>
<dbReference type="PDBsum" id="1UN2"/>
<dbReference type="PDBsum" id="2B3S"/>
<dbReference type="PDBsum" id="2B6M"/>
<dbReference type="PDBsum" id="2HI7"/>
<dbReference type="PDBsum" id="2LEG"/>
<dbReference type="PDBsum" id="2NDO"/>
<dbReference type="PDBsum" id="2ZUP"/>
<dbReference type="PDBsum" id="3E9J"/>
<dbReference type="PDBsum" id="4TKY"/>
<dbReference type="PDBsum" id="4ZIJ"/>
<dbReference type="PDBsum" id="5QKC"/>
<dbReference type="PDBsum" id="5QKD"/>
<dbReference type="PDBsum" id="5QKE"/>
<dbReference type="PDBsum" id="5QKF"/>
<dbReference type="PDBsum" id="5QKG"/>
<dbReference type="PDBsum" id="5QKH"/>
<dbReference type="PDBsum" id="5QKI"/>
<dbReference type="PDBsum" id="5QKJ"/>
<dbReference type="PDBsum" id="5QKK"/>
<dbReference type="PDBsum" id="5QKL"/>
<dbReference type="PDBsum" id="5QKM"/>
<dbReference type="PDBsum" id="5QKN"/>
<dbReference type="PDBsum" id="5QKO"/>
<dbReference type="PDBsum" id="5QKP"/>
<dbReference type="PDBsum" id="5QKQ"/>
<dbReference type="PDBsum" id="5QKR"/>
<dbReference type="PDBsum" id="5QKS"/>
<dbReference type="PDBsum" id="5QKT"/>
<dbReference type="PDBsum" id="5QKU"/>
<dbReference type="PDBsum" id="5QKV"/>
<dbReference type="PDBsum" id="5QKW"/>
<dbReference type="PDBsum" id="5QKX"/>
<dbReference type="PDBsum" id="5QKY"/>
<dbReference type="PDBsum" id="5QKZ"/>
<dbReference type="PDBsum" id="5QL0"/>
<dbReference type="PDBsum" id="5QL1"/>
<dbReference type="PDBsum" id="5QL2"/>
<dbReference type="PDBsum" id="5QL3"/>
<dbReference type="PDBsum" id="5QL4"/>
<dbReference type="PDBsum" id="5QL5"/>
<dbReference type="PDBsum" id="5QL6"/>
<dbReference type="PDBsum" id="5QL7"/>
<dbReference type="PDBsum" id="5QL8"/>
<dbReference type="PDBsum" id="5QL9"/>
<dbReference type="PDBsum" id="5QLA"/>
<dbReference type="PDBsum" id="5QLB"/>
<dbReference type="PDBsum" id="5QLC"/>
<dbReference type="PDBsum" id="5QLD"/>
<dbReference type="PDBsum" id="5QLE"/>
<dbReference type="PDBsum" id="5QLF"/>
<dbReference type="PDBsum" id="5QLG"/>
<dbReference type="PDBsum" id="5QLH"/>
<dbReference type="PDBsum" id="5QLI"/>
<dbReference type="PDBsum" id="5QLJ"/>
<dbReference type="PDBsum" id="5QLK"/>
<dbReference type="PDBsum" id="5QLL"/>
<dbReference type="PDBsum" id="5QLM"/>
<dbReference type="PDBsum" id="5QLN"/>
<dbReference type="PDBsum" id="5QLO"/>
<dbReference type="PDBsum" id="5QLP"/>
<dbReference type="PDBsum" id="5QLQ"/>
<dbReference type="PDBsum" id="5QLR"/>
<dbReference type="PDBsum" id="5QLS"/>
<dbReference type="PDBsum" id="5QLT"/>
<dbReference type="PDBsum" id="5QLU"/>
<dbReference type="PDBsum" id="5QLV"/>
<dbReference type="PDBsum" id="5QLW"/>
<dbReference type="PDBsum" id="5QLX"/>
<dbReference type="PDBsum" id="5QLY"/>
<dbReference type="PDBsum" id="5QLZ"/>
<dbReference type="PDBsum" id="5QM0"/>
<dbReference type="PDBsum" id="5QM1"/>
<dbReference type="PDBsum" id="5QM2"/>
<dbReference type="PDBsum" id="5QM3"/>
<dbReference type="PDBsum" id="5QM4"/>
<dbReference type="PDBsum" id="5QM5"/>
<dbReference type="PDBsum" id="5QM6"/>
<dbReference type="PDBsum" id="5QM7"/>
<dbReference type="PDBsum" id="5QM8"/>
<dbReference type="PDBsum" id="5QM9"/>
<dbReference type="PDBsum" id="5QMA"/>
<dbReference type="PDBsum" id="5QMB"/>
<dbReference type="PDBsum" id="5QMC"/>
<dbReference type="PDBsum" id="5QMD"/>
<dbReference type="PDBsum" id="5QME"/>
<dbReference type="PDBsum" id="5QMF"/>
<dbReference type="PDBsum" id="5QMG"/>
<dbReference type="PDBsum" id="5QMH"/>
<dbReference type="PDBsum" id="5QMI"/>
<dbReference type="PDBsum" id="5QMJ"/>
<dbReference type="PDBsum" id="5QMK"/>
<dbReference type="PDBsum" id="5QML"/>
<dbReference type="PDBsum" id="5QMM"/>
<dbReference type="PDBsum" id="5QMN"/>
<dbReference type="PDBsum" id="5QMO"/>
<dbReference type="PDBsum" id="5QMP"/>
<dbReference type="PDBsum" id="5QMQ"/>
<dbReference type="PDBsum" id="5QMR"/>
<dbReference type="PDBsum" id="5QMS"/>
<dbReference type="PDBsum" id="5QMT"/>
<dbReference type="PDBsum" id="5QMU"/>
<dbReference type="PDBsum" id="5QMV"/>
<dbReference type="PDBsum" id="5QMW"/>
<dbReference type="PDBsum" id="5QMX"/>
<dbReference type="PDBsum" id="5QMY"/>
<dbReference type="PDBsum" id="5QMZ"/>
<dbReference type="PDBsum" id="5QN0"/>
<dbReference type="PDBsum" id="5QN1"/>
<dbReference type="PDBsum" id="5QN2"/>
<dbReference type="PDBsum" id="5QN3"/>
<dbReference type="PDBsum" id="5QN4"/>
<dbReference type="PDBsum" id="5QN5"/>
<dbReference type="PDBsum" id="5QN6"/>
<dbReference type="PDBsum" id="5QN7"/>
<dbReference type="PDBsum" id="5QN8"/>
<dbReference type="PDBsum" id="5QN9"/>
<dbReference type="PDBsum" id="5QNA"/>
<dbReference type="PDBsum" id="5QNB"/>
<dbReference type="PDBsum" id="5QNC"/>
<dbReference type="PDBsum" id="5QND"/>
<dbReference type="PDBsum" id="5QNE"/>
<dbReference type="PDBsum" id="5QNF"/>
<dbReference type="PDBsum" id="5QNG"/>
<dbReference type="PDBsum" id="5QNH"/>
<dbReference type="PDBsum" id="5QNI"/>
<dbReference type="PDBsum" id="5QNJ"/>
<dbReference type="PDBsum" id="5QNK"/>
<dbReference type="PDBsum" id="5QNL"/>
<dbReference type="PDBsum" id="5QNM"/>
<dbReference type="PDBsum" id="5QNN"/>
<dbReference type="PDBsum" id="5QNO"/>
<dbReference type="PDBsum" id="5QNP"/>
<dbReference type="PDBsum" id="5QNQ"/>
<dbReference type="PDBsum" id="5QNR"/>
<dbReference type="PDBsum" id="5QNS"/>
<dbReference type="PDBsum" id="5QNT"/>
<dbReference type="PDBsum" id="5QNU"/>
<dbReference type="PDBsum" id="5QNV"/>
<dbReference type="PDBsum" id="5QNW"/>
<dbReference type="PDBsum" id="5QNX"/>
<dbReference type="PDBsum" id="5QNY"/>
<dbReference type="PDBsum" id="5QNZ"/>
<dbReference type="PDBsum" id="5QO0"/>
<dbReference type="PDBsum" id="5QO1"/>
<dbReference type="PDBsum" id="5QO2"/>
<dbReference type="PDBsum" id="5QO3"/>
<dbReference type="PDBsum" id="5QO4"/>
<dbReference type="PDBsum" id="5QO5"/>
<dbReference type="PDBsum" id="5QO6"/>
<dbReference type="PDBsum" id="5QO7"/>
<dbReference type="PDBsum" id="5QO8"/>
<dbReference type="PDBsum" id="5QO9"/>
<dbReference type="PDBsum" id="5QOA"/>
<dbReference type="PDBsum" id="5QOB"/>
<dbReference type="PDBsum" id="5QOC"/>
<dbReference type="PDBsum" id="5QOD"/>
<dbReference type="PDBsum" id="5QOE"/>
<dbReference type="PDBsum" id="5QOF"/>
<dbReference type="PDBsum" id="5QOG"/>
<dbReference type="PDBsum" id="6BQX"/>
<dbReference type="PDBsum" id="6BR4"/>
<dbReference type="PDBsum" id="6PBI"/>
<dbReference type="PDBsum" id="6PC9"/>
<dbReference type="PDBsum" id="6PD7"/>
<dbReference type="PDBsum" id="6PDH"/>
<dbReference type="PDBsum" id="6PG1"/>
<dbReference type="PDBsum" id="6PG2"/>
<dbReference type="PDBsum" id="6PGJ"/>
<dbReference type="PDBsum" id="6PIQ"/>
<dbReference type="PDBsum" id="6PLI"/>
<dbReference type="PDBsum" id="6PMF"/>
<dbReference type="PDBsum" id="6PML"/>
<dbReference type="PDBsum" id="6POH"/>
<dbReference type="PDBsum" id="6POI"/>
<dbReference type="PDBsum" id="6POQ"/>
<dbReference type="PDBsum" id="6PVY"/>
<dbReference type="PDBsum" id="6PVZ"/>
<dbReference type="PDBsum" id="6WHD"/>
<dbReference type="PDBsum" id="6XSP"/>
<dbReference type="PDBsum" id="6XSQ"/>
<dbReference type="PDBsum" id="6XT3"/>
<dbReference type="PDBsum" id="7L76"/>
<dbReference type="PDBsum" id="7L7C"/>
<dbReference type="PDBsum" id="7LHP"/>
<dbReference type="PDBsum" id="7LSM"/>
<dbReference type="PDBsum" id="7S1C"/>
<dbReference type="PDBsum" id="7S1D"/>
<dbReference type="PDBsum" id="7S1F"/>
<dbReference type="PDBsum" id="7S1L"/>
<dbReference type="PDBsum" id="7TTV"/>
<dbReference type="PDBsum" id="8CXD"/>
<dbReference type="PDBsum" id="8CXE"/>
<dbReference type="PDBsum" id="8CZM"/>
<dbReference type="PDBsum" id="8CZN"/>
<dbReference type="PDBsum" id="8D10"/>
<dbReference type="PDBsum" id="8D11"/>
<dbReference type="PDBsum" id="8D12"/>
<dbReference type="PDBsum" id="8DG0"/>
<dbReference type="PDBsum" id="8DG1"/>
<dbReference type="PDBsum" id="8DG2"/>
<dbReference type="PDBsum" id="8DN0"/>
<dbReference type="PDBsum" id="8EOC"/>
<dbReference type="PDBsum" id="8EQO"/>
<dbReference type="PDBsum" id="8EQP"/>
<dbReference type="PDBsum" id="8EQQ"/>
<dbReference type="PDBsum" id="8EQR"/>
<dbReference type="PDBsum" id="8U1Y"/>
<dbReference type="PDBsum" id="8U59"/>
<dbReference type="PDBsum" id="8UBQ"/>
<dbReference type="PDBsum" id="8UF9"/>
<dbReference type="PDBsum" id="9EGR"/>
<dbReference type="BMRB" id="P0AEG4"/>
<dbReference type="SMR" id="P0AEG4"/>
<dbReference type="BioGRID" id="4261200">
    <property type="interactions" value="189"/>
</dbReference>
<dbReference type="DIP" id="DIP-35886N"/>
<dbReference type="FunCoup" id="P0AEG4">
    <property type="interactions" value="206"/>
</dbReference>
<dbReference type="IntAct" id="P0AEG4">
    <property type="interactions" value="20"/>
</dbReference>
<dbReference type="MINT" id="P0AEG4"/>
<dbReference type="STRING" id="511145.b3860"/>
<dbReference type="BindingDB" id="P0AEG4"/>
<dbReference type="ChEMBL" id="CHEMBL3559645"/>
<dbReference type="DrugBank" id="DB08689">
    <property type="generic name" value="Ubiquinone Q1"/>
</dbReference>
<dbReference type="jPOST" id="P0AEG4"/>
<dbReference type="PaxDb" id="511145-b3860"/>
<dbReference type="EnsemblBacteria" id="AAC76858">
    <property type="protein sequence ID" value="AAC76858"/>
    <property type="gene ID" value="b3860"/>
</dbReference>
<dbReference type="GeneID" id="93778077"/>
<dbReference type="GeneID" id="948353"/>
<dbReference type="KEGG" id="ecj:JW3832"/>
<dbReference type="KEGG" id="eco:b3860"/>
<dbReference type="KEGG" id="ecoc:C3026_20865"/>
<dbReference type="PATRIC" id="fig|1411691.4.peg.2855"/>
<dbReference type="EchoBASE" id="EB1274"/>
<dbReference type="eggNOG" id="COG1651">
    <property type="taxonomic scope" value="Bacteria"/>
</dbReference>
<dbReference type="HOGENOM" id="CLU_088255_3_0_6"/>
<dbReference type="InParanoid" id="P0AEG4"/>
<dbReference type="OMA" id="NAIHKQK"/>
<dbReference type="OrthoDB" id="9784896at2"/>
<dbReference type="PhylomeDB" id="P0AEG4"/>
<dbReference type="BioCyc" id="EcoCyc:DISULFOXRED-MONOMER"/>
<dbReference type="BioCyc" id="MetaCyc:DISULFOXRED-MONOMER"/>
<dbReference type="BRENDA" id="1.8.4.15">
    <property type="organism ID" value="2026"/>
</dbReference>
<dbReference type="EvolutionaryTrace" id="P0AEG4"/>
<dbReference type="PRO" id="PR:P0AEG4"/>
<dbReference type="Proteomes" id="UP000000625">
    <property type="component" value="Chromosome"/>
</dbReference>
<dbReference type="GO" id="GO:0030288">
    <property type="term" value="C:outer membrane-bounded periplasmic space"/>
    <property type="evidence" value="ECO:0000314"/>
    <property type="project" value="EcoCyc"/>
</dbReference>
<dbReference type="GO" id="GO:0003756">
    <property type="term" value="F:protein disulfide isomerase activity"/>
    <property type="evidence" value="ECO:0000314"/>
    <property type="project" value="EcoliWiki"/>
</dbReference>
<dbReference type="GO" id="GO:0015035">
    <property type="term" value="F:protein-disulfide reductase activity"/>
    <property type="evidence" value="ECO:0000314"/>
    <property type="project" value="EcoCyc"/>
</dbReference>
<dbReference type="GO" id="GO:0071236">
    <property type="term" value="P:cellular response to antibiotic"/>
    <property type="evidence" value="ECO:0000315"/>
    <property type="project" value="EcoliWiki"/>
</dbReference>
<dbReference type="CDD" id="cd03019">
    <property type="entry name" value="DsbA_DsbA"/>
    <property type="match status" value="1"/>
</dbReference>
<dbReference type="FunFam" id="3.40.30.10:FF:000052">
    <property type="entry name" value="Thiol:disulfide interchange protein"/>
    <property type="match status" value="1"/>
</dbReference>
<dbReference type="Gene3D" id="3.40.30.10">
    <property type="entry name" value="Glutaredoxin"/>
    <property type="match status" value="2"/>
</dbReference>
<dbReference type="InterPro" id="IPR001853">
    <property type="entry name" value="DSBA-like_thioredoxin_dom"/>
</dbReference>
<dbReference type="InterPro" id="IPR023205">
    <property type="entry name" value="DsbA/DsbL"/>
</dbReference>
<dbReference type="InterPro" id="IPR050824">
    <property type="entry name" value="Thiol_disulfide_DsbA"/>
</dbReference>
<dbReference type="InterPro" id="IPR036249">
    <property type="entry name" value="Thioredoxin-like_sf"/>
</dbReference>
<dbReference type="InterPro" id="IPR017937">
    <property type="entry name" value="Thioredoxin_CS"/>
</dbReference>
<dbReference type="InterPro" id="IPR013766">
    <property type="entry name" value="Thioredoxin_domain"/>
</dbReference>
<dbReference type="NCBIfam" id="NF008198">
    <property type="entry name" value="PRK10954.1"/>
    <property type="match status" value="1"/>
</dbReference>
<dbReference type="PANTHER" id="PTHR35891">
    <property type="entry name" value="THIOL:DISULFIDE INTERCHANGE PROTEIN DSBA"/>
    <property type="match status" value="1"/>
</dbReference>
<dbReference type="PANTHER" id="PTHR35891:SF2">
    <property type="entry name" value="THIOL:DISULFIDE INTERCHANGE PROTEIN DSBA"/>
    <property type="match status" value="1"/>
</dbReference>
<dbReference type="Pfam" id="PF01323">
    <property type="entry name" value="DSBA"/>
    <property type="match status" value="1"/>
</dbReference>
<dbReference type="PIRSF" id="PIRSF001488">
    <property type="entry name" value="Tdi_protein"/>
    <property type="match status" value="1"/>
</dbReference>
<dbReference type="SUPFAM" id="SSF52833">
    <property type="entry name" value="Thioredoxin-like"/>
    <property type="match status" value="1"/>
</dbReference>
<dbReference type="PROSITE" id="PS00194">
    <property type="entry name" value="THIOREDOXIN_1"/>
    <property type="match status" value="1"/>
</dbReference>
<dbReference type="PROSITE" id="PS51352">
    <property type="entry name" value="THIOREDOXIN_2"/>
    <property type="match status" value="1"/>
</dbReference>
<reference key="1">
    <citation type="journal article" date="1991" name="Cell">
        <title>Identification of a protein required for disulfide bond formation in vivo.</title>
        <authorList>
            <person name="Bardwell J.C.A."/>
            <person name="McGovern K."/>
            <person name="Beckwith J."/>
        </authorList>
    </citation>
    <scope>NUCLEOTIDE SEQUENCE [GENOMIC DNA]</scope>
    <source>
        <strain>K12</strain>
    </source>
</reference>
<reference key="2">
    <citation type="journal article" date="1992" name="EMBO J.">
        <title>Identification and characterization of an Escherichia coli gene required for the formation of correctly folded alkaline phosphatase, a periplasmic enzyme.</title>
        <authorList>
            <person name="Kamitani S."/>
            <person name="Akiyama Y."/>
            <person name="Ito K."/>
        </authorList>
    </citation>
    <scope>NUCLEOTIDE SEQUENCE [GENOMIC DNA]</scope>
    <source>
        <strain>K12</strain>
    </source>
</reference>
<reference key="3">
    <citation type="journal article" date="1993" name="Nucleic Acids Res.">
        <title>Analysis of the Escherichia coli genome. III. DNA sequence of the region from 87.2 to 89.2 minutes.</title>
        <authorList>
            <person name="Plunkett G. III"/>
            <person name="Burland V."/>
            <person name="Daniels D.L."/>
            <person name="Blattner F.R."/>
        </authorList>
    </citation>
    <scope>NUCLEOTIDE SEQUENCE [LARGE SCALE GENOMIC DNA]</scope>
    <source>
        <strain>K12 / MG1655 / ATCC 47076</strain>
    </source>
</reference>
<reference key="4">
    <citation type="journal article" date="1997" name="Science">
        <title>The complete genome sequence of Escherichia coli K-12.</title>
        <authorList>
            <person name="Blattner F.R."/>
            <person name="Plunkett G. III"/>
            <person name="Bloch C.A."/>
            <person name="Perna N.T."/>
            <person name="Burland V."/>
            <person name="Riley M."/>
            <person name="Collado-Vides J."/>
            <person name="Glasner J.D."/>
            <person name="Rode C.K."/>
            <person name="Mayhew G.F."/>
            <person name="Gregor J."/>
            <person name="Davis N.W."/>
            <person name="Kirkpatrick H.A."/>
            <person name="Goeden M.A."/>
            <person name="Rose D.J."/>
            <person name="Mau B."/>
            <person name="Shao Y."/>
        </authorList>
    </citation>
    <scope>NUCLEOTIDE SEQUENCE [LARGE SCALE GENOMIC DNA]</scope>
    <source>
        <strain>K12 / MG1655 / ATCC 47076</strain>
    </source>
</reference>
<reference key="5">
    <citation type="journal article" date="2006" name="Mol. Syst. Biol.">
        <title>Highly accurate genome sequences of Escherichia coli K-12 strains MG1655 and W3110.</title>
        <authorList>
            <person name="Hayashi K."/>
            <person name="Morooka N."/>
            <person name="Yamamoto Y."/>
            <person name="Fujita K."/>
            <person name="Isono K."/>
            <person name="Choi S."/>
            <person name="Ohtsubo E."/>
            <person name="Baba T."/>
            <person name="Wanner B.L."/>
            <person name="Mori H."/>
            <person name="Horiuchi T."/>
        </authorList>
    </citation>
    <scope>NUCLEOTIDE SEQUENCE [LARGE SCALE GENOMIC DNA]</scope>
    <source>
        <strain>K12 / W3110 / ATCC 27325 / DSM 5911</strain>
    </source>
</reference>
<reference key="6">
    <citation type="submission" date="1995-09" db="EMBL/GenBank/DDBJ databases">
        <authorList>
            <person name="Grauschopf U."/>
            <person name="Winther J."/>
            <person name="Korber P."/>
            <person name="Zander T."/>
            <person name="Dallinger P."/>
            <person name="Bardwell J.C.A."/>
        </authorList>
    </citation>
    <scope>NUCLEOTIDE SEQUENCE [GENOMIC DNA] OF 1-49</scope>
</reference>
<reference key="7">
    <citation type="journal article" date="1993" name="Biochemistry">
        <title>The reactive and destabilizing disulfide bond of DsbA, a protein required for protein disulfide bond formation in vivo.</title>
        <authorList>
            <person name="Zapun A."/>
            <person name="Bardwell J.C.A."/>
            <person name="Creighton T.E."/>
        </authorList>
    </citation>
    <scope>PROTEIN SEQUENCE OF 20-24</scope>
    <scope>CHARACTERIZATION</scope>
</reference>
<reference key="8">
    <citation type="journal article" date="1997" name="Electrophoresis">
        <title>Comparing the predicted and observed properties of proteins encoded in the genome of Escherichia coli K-12.</title>
        <authorList>
            <person name="Link A.J."/>
            <person name="Robison K."/>
            <person name="Church G.M."/>
        </authorList>
    </citation>
    <scope>PROTEIN SEQUENCE OF 20-31</scope>
    <source>
        <strain>K12 / EMG2</strain>
    </source>
</reference>
<reference key="9">
    <citation type="journal article" date="1998" name="J. Mol. Biol.">
        <title>Protein identification with N and C-terminal sequence tags in proteome projects.</title>
        <authorList>
            <person name="Wilkins M.R."/>
            <person name="Gasteiger E."/>
            <person name="Tonella L."/>
            <person name="Ou K."/>
            <person name="Tyler M."/>
            <person name="Sanchez J.-C."/>
            <person name="Gooley A.A."/>
            <person name="Walsh B.J."/>
            <person name="Bairoch A."/>
            <person name="Appel R.D."/>
            <person name="Williams K.L."/>
            <person name="Hochstrasser D.F."/>
        </authorList>
    </citation>
    <scope>PROTEIN SEQUENCE OF 20-23</scope>
    <source>
        <strain>K12 / W3110 / ATCC 27325 / DSM 5911</strain>
    </source>
</reference>
<reference key="10">
    <citation type="journal article" date="1995" name="Cell">
        <title>Why is DsbA such an oxidizing disulfide catalyst?</title>
        <authorList>
            <person name="Grauschopf U."/>
            <person name="Winther J.R."/>
            <person name="Korber P."/>
            <person name="Zander T."/>
            <person name="Dallinger P."/>
            <person name="Bardwell J.C.A."/>
        </authorList>
    </citation>
    <scope>MUTAGENESIS OF PRO-50 AND HIS-51</scope>
</reference>
<reference key="11">
    <citation type="journal article" date="1992" name="J. Biol. Chem.">
        <title>In vitro catalysis of oxidative folding of disulfide-bonded proteins by the Escherichia coli dsbA (ppfA) gene product.</title>
        <authorList>
            <person name="Akiyama Y."/>
            <person name="Kamitani S."/>
            <person name="Kusukawa N."/>
            <person name="Ito K."/>
        </authorList>
    </citation>
    <scope>FUNCTION</scope>
</reference>
<reference key="12">
    <citation type="journal article" date="1997" name="Electrophoresis">
        <title>Escherichia coli proteome analysis using the gene-protein database.</title>
        <authorList>
            <person name="VanBogelen R.A."/>
            <person name="Abshire K.Z."/>
            <person name="Moldover B."/>
            <person name="Olson E.R."/>
            <person name="Neidhardt F.C."/>
        </authorList>
    </citation>
    <scope>IDENTIFICATION BY 2D-GEL</scope>
</reference>
<reference key="13">
    <citation type="journal article" date="2012" name="J. Bacteriol.">
        <title>Perturbation of the oxidizing environment of the periplasm stimulates the PhoQ/PhoP system in Escherichia coli.</title>
        <authorList>
            <person name="Lippa A.M."/>
            <person name="Goulian M."/>
        </authorList>
    </citation>
    <scope>FUNCTION IN PHOP/PHOQ REGULATION</scope>
    <scope>DISRUPTION PHENOTYPE</scope>
    <source>
        <strain>K12 / MG1655 / ATCC 47076</strain>
    </source>
</reference>
<reference key="14">
    <citation type="journal article" date="1993" name="Nature">
        <title>Crystal structure of the DsbA protein required for disulphide bond formation in vivo.</title>
        <authorList>
            <person name="Martin J.L."/>
            <person name="Bardwell J.C.A."/>
            <person name="Kuriyan J."/>
        </authorList>
    </citation>
    <scope>X-RAY CRYSTALLOGRAPHY (2.0 ANGSTROMS)</scope>
</reference>
<reference key="15">
    <citation type="journal article" date="1997" name="Protein Sci.">
        <title>The uncharged surface features surrounding the active site of Escherichia coli DsbA are conserved and are implicated in peptide binding.</title>
        <authorList>
            <person name="Guddat L.W."/>
            <person name="Bardwell J.C.A."/>
            <person name="Zander T."/>
            <person name="Martin J.L."/>
        </authorList>
    </citation>
    <scope>X-RAY CRYSTALLOGRAPHY (1.7 ANGSTROMS)</scope>
</reference>
<reference key="16">
    <citation type="journal article" date="1997" name="Protein Sci.">
        <title>Structural analysis of three His32 mutants of DsbA: support for an electrostatic role of His32 in DsbA stability.</title>
        <authorList>
            <person name="Guddat L.W."/>
            <person name="Bardwell J.C.A."/>
            <person name="Glockshuber R."/>
            <person name="Huber-Wunderlich M."/>
            <person name="Zander T."/>
            <person name="Martin J.L."/>
        </authorList>
    </citation>
    <scope>X-RAY CRYSTALLOGRAPHY (1.7 ANGSTROMS) OF HIS-51 MUTANTS</scope>
    <scope>DISULFIDE BOND</scope>
</reference>
<reference key="17">
    <citation type="journal article" date="1998" name="Structure">
        <title>Crystal structures of reduced and oxidized DsbA: investigation of domain motion and thiolate stabilization.</title>
        <authorList>
            <person name="Guddat L.W."/>
            <person name="Bardwell J.C.A."/>
            <person name="Martin J.L."/>
        </authorList>
    </citation>
    <scope>X-RAY CRYSTALLOGRAPHY (2.0 ANGSTROMS)</scope>
</reference>
<reference key="18">
    <citation type="journal article" date="1998" name="Biochemistry">
        <title>Structure of reduced DsbA from Escherichia coli in solution.</title>
        <authorList>
            <person name="Schirra H.J."/>
            <person name="Renner C."/>
            <person name="Czisch M."/>
            <person name="Huber-Wunderlich M."/>
            <person name="Holak T.A."/>
            <person name="Glockshuber R."/>
        </authorList>
    </citation>
    <scope>STRUCTURE BY NMR</scope>
</reference>
<reference key="19">
    <citation type="journal article" date="1999" name="Protein Sci.">
        <title>On the role of the cis-proline residue in the active site of DsbA.</title>
        <authorList>
            <person name="Charbonnier J.-B."/>
            <person name="Belin P."/>
            <person name="Moutiez M."/>
            <person name="Stura E.A."/>
            <person name="Quemeneur E."/>
        </authorList>
    </citation>
    <scope>X-RAY CRYSTALLOGRAPHY (2.8 ANGSTROMS)</scope>
</reference>
<reference key="20">
    <citation type="journal article" date="2005" name="J. Mol. Biol.">
        <title>Intriguing conformation changes associated with the trans/cis isomerization of a prolyl residue in the active site of the DsbA C33A mutant.</title>
        <authorList>
            <person name="Ondo-Mbele E."/>
            <person name="Vives C."/>
            <person name="Kone A."/>
            <person name="Serre L."/>
        </authorList>
    </citation>
    <scope>X-RAY CRYSTALLOGRAPHY (2.0 ANGSTROMS) OF MUTANT ALA-52 OF 20-208</scope>
</reference>
<sequence>MKKIWLALAGLVLAFSASAAQYEDGKQYTTLEKPVAGAPQVLEFFSFFCPHCYQFEEVLHISDNVKKKLPEGVKMTKYHVNFMGGDLGKDLTQAWAVAMALGVEDKVTVPLFEGVQKTQTIRSASDIRDVFINAGIKGEEYDAAWNSFVVKSLVAQQEKAAADVQLRGVPAMFVNGKYQLNPQGMDTSNMDVFVQQYADTVKYLSEKK</sequence>